<comment type="function">
    <text evidence="1">Participates actively in the response to hyperosmotic and heat shock by preventing the aggregation of stress-denatured proteins, in association with DnaK and GrpE. It is the nucleotide exchange factor for DnaK and may function as a thermosensor. Unfolded proteins bind initially to DnaJ; upon interaction with the DnaJ-bound protein, DnaK hydrolyzes its bound ATP, resulting in the formation of a stable complex. GrpE releases ADP from DnaK; ATP binding to DnaK triggers the release of the substrate protein, thus completing the reaction cycle. Several rounds of ATP-dependent interactions between DnaJ, DnaK and GrpE are required for fully efficient folding.</text>
</comment>
<comment type="subunit">
    <text evidence="1">Homodimer.</text>
</comment>
<comment type="subcellular location">
    <subcellularLocation>
        <location evidence="1">Cytoplasm</location>
    </subcellularLocation>
</comment>
<comment type="similarity">
    <text evidence="1">Belongs to the GrpE family.</text>
</comment>
<proteinExistence type="inferred from homology"/>
<dbReference type="EMBL" id="BX842656">
    <property type="protein sequence ID" value="CAE81226.1"/>
    <property type="molecule type" value="Genomic_DNA"/>
</dbReference>
<dbReference type="RefSeq" id="WP_011166169.1">
    <property type="nucleotide sequence ID" value="NC_005363.1"/>
</dbReference>
<dbReference type="SMR" id="Q6MGQ3"/>
<dbReference type="STRING" id="264462.Bd3871"/>
<dbReference type="GeneID" id="93014637"/>
<dbReference type="KEGG" id="bba:Bd3871"/>
<dbReference type="eggNOG" id="COG0576">
    <property type="taxonomic scope" value="Bacteria"/>
</dbReference>
<dbReference type="HOGENOM" id="CLU_057217_5_2_7"/>
<dbReference type="Proteomes" id="UP000008080">
    <property type="component" value="Chromosome"/>
</dbReference>
<dbReference type="GO" id="GO:0005737">
    <property type="term" value="C:cytoplasm"/>
    <property type="evidence" value="ECO:0007669"/>
    <property type="project" value="UniProtKB-SubCell"/>
</dbReference>
<dbReference type="GO" id="GO:0000774">
    <property type="term" value="F:adenyl-nucleotide exchange factor activity"/>
    <property type="evidence" value="ECO:0007669"/>
    <property type="project" value="InterPro"/>
</dbReference>
<dbReference type="GO" id="GO:0042803">
    <property type="term" value="F:protein homodimerization activity"/>
    <property type="evidence" value="ECO:0007669"/>
    <property type="project" value="InterPro"/>
</dbReference>
<dbReference type="GO" id="GO:0051087">
    <property type="term" value="F:protein-folding chaperone binding"/>
    <property type="evidence" value="ECO:0007669"/>
    <property type="project" value="InterPro"/>
</dbReference>
<dbReference type="GO" id="GO:0051082">
    <property type="term" value="F:unfolded protein binding"/>
    <property type="evidence" value="ECO:0007669"/>
    <property type="project" value="TreeGrafter"/>
</dbReference>
<dbReference type="GO" id="GO:0006457">
    <property type="term" value="P:protein folding"/>
    <property type="evidence" value="ECO:0007669"/>
    <property type="project" value="InterPro"/>
</dbReference>
<dbReference type="CDD" id="cd00446">
    <property type="entry name" value="GrpE"/>
    <property type="match status" value="1"/>
</dbReference>
<dbReference type="Gene3D" id="3.90.20.20">
    <property type="match status" value="1"/>
</dbReference>
<dbReference type="Gene3D" id="2.30.22.10">
    <property type="entry name" value="Head domain of nucleotide exchange factor GrpE"/>
    <property type="match status" value="1"/>
</dbReference>
<dbReference type="HAMAP" id="MF_01151">
    <property type="entry name" value="GrpE"/>
    <property type="match status" value="1"/>
</dbReference>
<dbReference type="InterPro" id="IPR000740">
    <property type="entry name" value="GrpE"/>
</dbReference>
<dbReference type="InterPro" id="IPR013805">
    <property type="entry name" value="GrpE_coiled_coil"/>
</dbReference>
<dbReference type="InterPro" id="IPR009012">
    <property type="entry name" value="GrpE_head"/>
</dbReference>
<dbReference type="NCBIfam" id="NF010738">
    <property type="entry name" value="PRK14140.1"/>
    <property type="match status" value="1"/>
</dbReference>
<dbReference type="PANTHER" id="PTHR21237">
    <property type="entry name" value="GRPE PROTEIN"/>
    <property type="match status" value="1"/>
</dbReference>
<dbReference type="PANTHER" id="PTHR21237:SF23">
    <property type="entry name" value="GRPE PROTEIN HOMOLOG, MITOCHONDRIAL"/>
    <property type="match status" value="1"/>
</dbReference>
<dbReference type="Pfam" id="PF01025">
    <property type="entry name" value="GrpE"/>
    <property type="match status" value="1"/>
</dbReference>
<dbReference type="PRINTS" id="PR00773">
    <property type="entry name" value="GRPEPROTEIN"/>
</dbReference>
<dbReference type="SUPFAM" id="SSF58014">
    <property type="entry name" value="Coiled-coil domain of nucleotide exchange factor GrpE"/>
    <property type="match status" value="1"/>
</dbReference>
<dbReference type="SUPFAM" id="SSF51064">
    <property type="entry name" value="Head domain of nucleotide exchange factor GrpE"/>
    <property type="match status" value="1"/>
</dbReference>
<dbReference type="PROSITE" id="PS01071">
    <property type="entry name" value="GRPE"/>
    <property type="match status" value="1"/>
</dbReference>
<sequence>MSEENNSQNSNPPNPENGEIASEIQKLQEQAEKFKNDYLYLRAEFENYKRNAIKERSELMKYGGERLVRDLLEVVDNFDRALSVNVSAENFNTFKQGVDMTAQELKSLLQRHNVIEIPAHGAPFDPSVHEALSSEATDQMAPGHIVRVFKKPYKLHDKVIRPGQVVVAKKPE</sequence>
<protein>
    <recommendedName>
        <fullName evidence="1">Protein GrpE</fullName>
    </recommendedName>
    <alternativeName>
        <fullName evidence="1">HSP-70 cofactor</fullName>
    </alternativeName>
</protein>
<reference key="1">
    <citation type="journal article" date="2004" name="Science">
        <title>A predator unmasked: life cycle of Bdellovibrio bacteriovorus from a genomic perspective.</title>
        <authorList>
            <person name="Rendulic S."/>
            <person name="Jagtap P."/>
            <person name="Rosinus A."/>
            <person name="Eppinger M."/>
            <person name="Baar C."/>
            <person name="Lanz C."/>
            <person name="Keller H."/>
            <person name="Lambert C."/>
            <person name="Evans K.J."/>
            <person name="Goesmann A."/>
            <person name="Meyer F."/>
            <person name="Sockett R.E."/>
            <person name="Schuster S.C."/>
        </authorList>
    </citation>
    <scope>NUCLEOTIDE SEQUENCE [LARGE SCALE GENOMIC DNA]</scope>
    <source>
        <strain>ATCC 15356 / DSM 50701 / NCIMB 9529 / HD100</strain>
    </source>
</reference>
<gene>
    <name evidence="1" type="primary">grpE</name>
    <name type="ordered locus">Bd3871</name>
</gene>
<evidence type="ECO:0000255" key="1">
    <source>
        <dbReference type="HAMAP-Rule" id="MF_01151"/>
    </source>
</evidence>
<evidence type="ECO:0000256" key="2">
    <source>
        <dbReference type="SAM" id="MobiDB-lite"/>
    </source>
</evidence>
<name>GRPE_BDEBA</name>
<feature type="chain" id="PRO_0000113747" description="Protein GrpE">
    <location>
        <begin position="1"/>
        <end position="172"/>
    </location>
</feature>
<feature type="region of interest" description="Disordered" evidence="2">
    <location>
        <begin position="1"/>
        <end position="22"/>
    </location>
</feature>
<feature type="compositionally biased region" description="Low complexity" evidence="2">
    <location>
        <begin position="1"/>
        <end position="11"/>
    </location>
</feature>
<organism>
    <name type="scientific">Bdellovibrio bacteriovorus (strain ATCC 15356 / DSM 50701 / NCIMB 9529 / HD100)</name>
    <dbReference type="NCBI Taxonomy" id="264462"/>
    <lineage>
        <taxon>Bacteria</taxon>
        <taxon>Pseudomonadati</taxon>
        <taxon>Bdellovibrionota</taxon>
        <taxon>Bdellovibrionia</taxon>
        <taxon>Bdellovibrionales</taxon>
        <taxon>Pseudobdellovibrionaceae</taxon>
        <taxon>Bdellovibrio</taxon>
    </lineage>
</organism>
<keyword id="KW-0143">Chaperone</keyword>
<keyword id="KW-0963">Cytoplasm</keyword>
<keyword id="KW-1185">Reference proteome</keyword>
<keyword id="KW-0346">Stress response</keyword>
<accession>Q6MGQ3</accession>